<gene>
    <name type="primary">RCK2</name>
    <name type="synonym">CLK1</name>
    <name type="synonym">CMK3</name>
    <name type="ordered locus">YLR248W</name>
    <name type="ORF">L9672.6</name>
</gene>
<evidence type="ECO:0000255" key="1"/>
<evidence type="ECO:0000255" key="2">
    <source>
        <dbReference type="PROSITE-ProRule" id="PRU00159"/>
    </source>
</evidence>
<evidence type="ECO:0000255" key="3">
    <source>
        <dbReference type="PROSITE-ProRule" id="PRU10027"/>
    </source>
</evidence>
<evidence type="ECO:0000256" key="4">
    <source>
        <dbReference type="SAM" id="MobiDB-lite"/>
    </source>
</evidence>
<evidence type="ECO:0000269" key="5">
    <source>
    </source>
</evidence>
<evidence type="ECO:0000269" key="6">
    <source>
    </source>
</evidence>
<evidence type="ECO:0000269" key="7">
    <source>
    </source>
</evidence>
<evidence type="ECO:0000305" key="8"/>
<evidence type="ECO:0007744" key="9">
    <source>
    </source>
</evidence>
<evidence type="ECO:0007744" key="10">
    <source>
    </source>
</evidence>
<proteinExistence type="evidence at protein level"/>
<protein>
    <recommendedName>
        <fullName>Serine/threonine-protein kinase RCK2</fullName>
        <ecNumber>2.7.11.1</ecNumber>
    </recommendedName>
    <alternativeName>
        <fullName>CAM kinase-like protein kinase CLK1</fullName>
    </alternativeName>
</protein>
<comment type="function">
    <text evidence="5">Serine/threonine-protein kinase involved in a signal transduction pathway that is activated by changes in the osmolarity of the extracellular environment.</text>
</comment>
<comment type="catalytic activity">
    <reaction>
        <text>L-seryl-[protein] + ATP = O-phospho-L-seryl-[protein] + ADP + H(+)</text>
        <dbReference type="Rhea" id="RHEA:17989"/>
        <dbReference type="Rhea" id="RHEA-COMP:9863"/>
        <dbReference type="Rhea" id="RHEA-COMP:11604"/>
        <dbReference type="ChEBI" id="CHEBI:15378"/>
        <dbReference type="ChEBI" id="CHEBI:29999"/>
        <dbReference type="ChEBI" id="CHEBI:30616"/>
        <dbReference type="ChEBI" id="CHEBI:83421"/>
        <dbReference type="ChEBI" id="CHEBI:456216"/>
        <dbReference type="EC" id="2.7.11.1"/>
    </reaction>
</comment>
<comment type="catalytic activity">
    <reaction>
        <text>L-threonyl-[protein] + ATP = O-phospho-L-threonyl-[protein] + ADP + H(+)</text>
        <dbReference type="Rhea" id="RHEA:46608"/>
        <dbReference type="Rhea" id="RHEA-COMP:11060"/>
        <dbReference type="Rhea" id="RHEA-COMP:11605"/>
        <dbReference type="ChEBI" id="CHEBI:15378"/>
        <dbReference type="ChEBI" id="CHEBI:30013"/>
        <dbReference type="ChEBI" id="CHEBI:30616"/>
        <dbReference type="ChEBI" id="CHEBI:61977"/>
        <dbReference type="ChEBI" id="CHEBI:456216"/>
        <dbReference type="EC" id="2.7.11.1"/>
    </reaction>
</comment>
<comment type="activity regulation">
    <text evidence="5">Activated by Ser-520 phosphorylation by HOG1.</text>
</comment>
<comment type="interaction">
    <interactant intactId="EBI-14885">
        <id>P38623</id>
    </interactant>
    <interactant intactId="EBI-8437">
        <id>P32485</id>
        <label>HOG1</label>
    </interactant>
    <organismsDiffer>false</organismsDiffer>
    <experiments>5</experiments>
</comment>
<comment type="subcellular location">
    <subcellularLocation>
        <location evidence="6">Cytoplasm</location>
    </subcellularLocation>
</comment>
<comment type="PTM">
    <text evidence="5">Autophosphorylated. Phosphorylated by HOG1 at Ser-520 after osmotic stress.</text>
</comment>
<comment type="miscellaneous">
    <text evidence="7">Present with 1790 molecules/cell in log phase SD medium.</text>
</comment>
<comment type="similarity">
    <text evidence="8">Belongs to the protein kinase superfamily. CAMK Ser/Thr protein kinase family. CaMK subfamily.</text>
</comment>
<comment type="sequence caution" evidence="8">
    <conflict type="frameshift">
        <sequence resource="EMBL-CDS" id="CAA50389"/>
    </conflict>
</comment>
<feature type="chain" id="PRO_0000086604" description="Serine/threonine-protein kinase RCK2">
    <location>
        <begin position="1"/>
        <end position="610"/>
    </location>
</feature>
<feature type="domain" description="Protein kinase" evidence="2">
    <location>
        <begin position="163"/>
        <end position="478"/>
    </location>
</feature>
<feature type="region of interest" description="Disordered" evidence="4">
    <location>
        <begin position="1"/>
        <end position="55"/>
    </location>
</feature>
<feature type="region of interest" description="Disordered" evidence="4">
    <location>
        <begin position="99"/>
        <end position="127"/>
    </location>
</feature>
<feature type="region of interest" description="Calmodulin-binding" evidence="1">
    <location>
        <begin position="493"/>
        <end position="506"/>
    </location>
</feature>
<feature type="region of interest" description="Disordered" evidence="4">
    <location>
        <begin position="541"/>
        <end position="564"/>
    </location>
</feature>
<feature type="compositionally biased region" description="Basic and acidic residues" evidence="4">
    <location>
        <begin position="11"/>
        <end position="24"/>
    </location>
</feature>
<feature type="compositionally biased region" description="Polar residues" evidence="4">
    <location>
        <begin position="31"/>
        <end position="55"/>
    </location>
</feature>
<feature type="active site" description="Proton acceptor" evidence="2 3">
    <location>
        <position position="313"/>
    </location>
</feature>
<feature type="binding site" evidence="2">
    <location>
        <begin position="169"/>
        <end position="177"/>
    </location>
    <ligand>
        <name>ATP</name>
        <dbReference type="ChEBI" id="CHEBI:30616"/>
    </ligand>
</feature>
<feature type="binding site" evidence="2">
    <location>
        <position position="201"/>
    </location>
    <ligand>
        <name>ATP</name>
        <dbReference type="ChEBI" id="CHEBI:30616"/>
    </ligand>
</feature>
<feature type="modified residue" description="Phosphoserine" evidence="10">
    <location>
        <position position="46"/>
    </location>
</feature>
<feature type="modified residue" description="Phosphoserine" evidence="10">
    <location>
        <position position="50"/>
    </location>
</feature>
<feature type="modified residue" description="Phosphoserine" evidence="10">
    <location>
        <position position="187"/>
    </location>
</feature>
<feature type="modified residue" description="Phosphothreonine" evidence="9">
    <location>
        <position position="350"/>
    </location>
</feature>
<feature type="modified residue" description="Phosphoserine" evidence="5">
    <location>
        <position position="520"/>
    </location>
</feature>
<feature type="sequence conflict" description="In Ref. 1; CAA50389 and 2; AAA64421." evidence="8" ref="1 2">
    <original>S</original>
    <variation>N</variation>
    <location>
        <position position="109"/>
    </location>
</feature>
<feature type="sequence conflict" description="In Ref. 1; CAA50389 and 2; AAA64421." evidence="8" ref="1 2">
    <original>N</original>
    <variation>H</variation>
    <location>
        <position position="188"/>
    </location>
</feature>
<feature type="sequence conflict" description="In Ref. 1; CAA50389 and 2; AAA64421." evidence="8" ref="1 2">
    <original>V</original>
    <variation>A</variation>
    <location>
        <position position="233"/>
    </location>
</feature>
<feature type="sequence conflict" description="In Ref. 1; CAA50389 and 2; AAA64421." evidence="8" ref="1 2">
    <original>R</original>
    <variation>P</variation>
    <location>
        <position position="328"/>
    </location>
</feature>
<feature type="sequence conflict" description="In Ref. 1; CAA50389 and 2; AAA64421." evidence="8" ref="1 2">
    <original>A</original>
    <variation>S</variation>
    <location>
        <position position="456"/>
    </location>
</feature>
<dbReference type="EC" id="2.7.11.1"/>
<dbReference type="EMBL" id="X71065">
    <property type="protein sequence ID" value="CAA50389.1"/>
    <property type="status" value="ALT_FRAME"/>
    <property type="molecule type" value="Genomic_DNA"/>
</dbReference>
<dbReference type="EMBL" id="U23464">
    <property type="protein sequence ID" value="AAA64421.1"/>
    <property type="molecule type" value="Genomic_DNA"/>
</dbReference>
<dbReference type="EMBL" id="U20865">
    <property type="protein sequence ID" value="AAB67392.1"/>
    <property type="molecule type" value="Genomic_DNA"/>
</dbReference>
<dbReference type="EMBL" id="BK006945">
    <property type="protein sequence ID" value="DAA09562.1"/>
    <property type="molecule type" value="Genomic_DNA"/>
</dbReference>
<dbReference type="PIR" id="S59394">
    <property type="entry name" value="S59394"/>
</dbReference>
<dbReference type="RefSeq" id="NP_013349.1">
    <property type="nucleotide sequence ID" value="NM_001182135.1"/>
</dbReference>
<dbReference type="SMR" id="P38623"/>
<dbReference type="BioGRID" id="31516">
    <property type="interactions" value="141"/>
</dbReference>
<dbReference type="DIP" id="DIP-5079N"/>
<dbReference type="FunCoup" id="P38623">
    <property type="interactions" value="378"/>
</dbReference>
<dbReference type="IntAct" id="P38623">
    <property type="interactions" value="13"/>
</dbReference>
<dbReference type="MINT" id="P38623"/>
<dbReference type="STRING" id="4932.YLR248W"/>
<dbReference type="GlyGen" id="P38623">
    <property type="glycosylation" value="1 site"/>
</dbReference>
<dbReference type="iPTMnet" id="P38623"/>
<dbReference type="PaxDb" id="4932-YLR248W"/>
<dbReference type="PeptideAtlas" id="P38623"/>
<dbReference type="EnsemblFungi" id="YLR248W_mRNA">
    <property type="protein sequence ID" value="YLR248W"/>
    <property type="gene ID" value="YLR248W"/>
</dbReference>
<dbReference type="GeneID" id="850950"/>
<dbReference type="KEGG" id="sce:YLR248W"/>
<dbReference type="AGR" id="SGD:S000004238"/>
<dbReference type="SGD" id="S000004238">
    <property type="gene designation" value="RCK2"/>
</dbReference>
<dbReference type="VEuPathDB" id="FungiDB:YLR248W"/>
<dbReference type="eggNOG" id="KOG0032">
    <property type="taxonomic scope" value="Eukaryota"/>
</dbReference>
<dbReference type="GeneTree" id="ENSGT00940000176587"/>
<dbReference type="HOGENOM" id="CLU_006421_3_0_1"/>
<dbReference type="InParanoid" id="P38623"/>
<dbReference type="OMA" id="KQYYYIV"/>
<dbReference type="OrthoDB" id="1738954at2759"/>
<dbReference type="BioCyc" id="YEAST:G3O-32353-MONOMER"/>
<dbReference type="BRENDA" id="2.7.11.1">
    <property type="organism ID" value="984"/>
</dbReference>
<dbReference type="BioGRID-ORCS" id="850950">
    <property type="hits" value="0 hits in 13 CRISPR screens"/>
</dbReference>
<dbReference type="PRO" id="PR:P38623"/>
<dbReference type="Proteomes" id="UP000002311">
    <property type="component" value="Chromosome XII"/>
</dbReference>
<dbReference type="RNAct" id="P38623">
    <property type="molecule type" value="protein"/>
</dbReference>
<dbReference type="GO" id="GO:0005737">
    <property type="term" value="C:cytoplasm"/>
    <property type="evidence" value="ECO:0000314"/>
    <property type="project" value="SGD"/>
</dbReference>
<dbReference type="GO" id="GO:0005524">
    <property type="term" value="F:ATP binding"/>
    <property type="evidence" value="ECO:0007669"/>
    <property type="project" value="UniProtKB-KW"/>
</dbReference>
<dbReference type="GO" id="GO:0005516">
    <property type="term" value="F:calmodulin binding"/>
    <property type="evidence" value="ECO:0007669"/>
    <property type="project" value="UniProtKB-KW"/>
</dbReference>
<dbReference type="GO" id="GO:0004672">
    <property type="term" value="F:protein kinase activity"/>
    <property type="evidence" value="ECO:0007005"/>
    <property type="project" value="SGD"/>
</dbReference>
<dbReference type="GO" id="GO:0106310">
    <property type="term" value="F:protein serine kinase activity"/>
    <property type="evidence" value="ECO:0007669"/>
    <property type="project" value="RHEA"/>
</dbReference>
<dbReference type="GO" id="GO:0004674">
    <property type="term" value="F:protein serine/threonine kinase activity"/>
    <property type="evidence" value="ECO:0000314"/>
    <property type="project" value="SGD"/>
</dbReference>
<dbReference type="GO" id="GO:0034599">
    <property type="term" value="P:cellular response to oxidative stress"/>
    <property type="evidence" value="ECO:0000315"/>
    <property type="project" value="SGD"/>
</dbReference>
<dbReference type="GO" id="GO:0007231">
    <property type="term" value="P:osmosensory signaling pathway"/>
    <property type="evidence" value="ECO:0000315"/>
    <property type="project" value="SGD"/>
</dbReference>
<dbReference type="GO" id="GO:0040020">
    <property type="term" value="P:regulation of meiotic nuclear division"/>
    <property type="evidence" value="ECO:0000315"/>
    <property type="project" value="SGD"/>
</dbReference>
<dbReference type="GO" id="GO:0007165">
    <property type="term" value="P:signal transduction"/>
    <property type="evidence" value="ECO:0000318"/>
    <property type="project" value="GO_Central"/>
</dbReference>
<dbReference type="CDD" id="cd14096">
    <property type="entry name" value="STKc_RCK1-like"/>
    <property type="match status" value="1"/>
</dbReference>
<dbReference type="FunFam" id="1.10.510.10:FF:000731">
    <property type="entry name" value="Serine/threonine-protein kinase RCK1"/>
    <property type="match status" value="1"/>
</dbReference>
<dbReference type="Gene3D" id="1.10.510.10">
    <property type="entry name" value="Transferase(Phosphotransferase) domain 1"/>
    <property type="match status" value="1"/>
</dbReference>
<dbReference type="InterPro" id="IPR011009">
    <property type="entry name" value="Kinase-like_dom_sf"/>
</dbReference>
<dbReference type="InterPro" id="IPR000719">
    <property type="entry name" value="Prot_kinase_dom"/>
</dbReference>
<dbReference type="InterPro" id="IPR017441">
    <property type="entry name" value="Protein_kinase_ATP_BS"/>
</dbReference>
<dbReference type="InterPro" id="IPR008271">
    <property type="entry name" value="Ser/Thr_kinase_AS"/>
</dbReference>
<dbReference type="PANTHER" id="PTHR24347">
    <property type="entry name" value="SERINE/THREONINE-PROTEIN KINASE"/>
    <property type="match status" value="1"/>
</dbReference>
<dbReference type="Pfam" id="PF00069">
    <property type="entry name" value="Pkinase"/>
    <property type="match status" value="1"/>
</dbReference>
<dbReference type="SMART" id="SM00220">
    <property type="entry name" value="S_TKc"/>
    <property type="match status" value="1"/>
</dbReference>
<dbReference type="SUPFAM" id="SSF56112">
    <property type="entry name" value="Protein kinase-like (PK-like)"/>
    <property type="match status" value="1"/>
</dbReference>
<dbReference type="PROSITE" id="PS00107">
    <property type="entry name" value="PROTEIN_KINASE_ATP"/>
    <property type="match status" value="1"/>
</dbReference>
<dbReference type="PROSITE" id="PS50011">
    <property type="entry name" value="PROTEIN_KINASE_DOM"/>
    <property type="match status" value="1"/>
</dbReference>
<dbReference type="PROSITE" id="PS00108">
    <property type="entry name" value="PROTEIN_KINASE_ST"/>
    <property type="match status" value="1"/>
</dbReference>
<keyword id="KW-0067">ATP-binding</keyword>
<keyword id="KW-0112">Calmodulin-binding</keyword>
<keyword id="KW-0963">Cytoplasm</keyword>
<keyword id="KW-0418">Kinase</keyword>
<keyword id="KW-0547">Nucleotide-binding</keyword>
<keyword id="KW-0597">Phosphoprotein</keyword>
<keyword id="KW-1185">Reference proteome</keyword>
<keyword id="KW-0723">Serine/threonine-protein kinase</keyword>
<keyword id="KW-0808">Transferase</keyword>
<accession>P38623</accession>
<accession>D6VYP6</accession>
<accession>Q02532</accession>
<accession>Q06557</accession>
<name>RCK2_YEAST</name>
<organism>
    <name type="scientific">Saccharomyces cerevisiae (strain ATCC 204508 / S288c)</name>
    <name type="common">Baker's yeast</name>
    <dbReference type="NCBI Taxonomy" id="559292"/>
    <lineage>
        <taxon>Eukaryota</taxon>
        <taxon>Fungi</taxon>
        <taxon>Dikarya</taxon>
        <taxon>Ascomycota</taxon>
        <taxon>Saccharomycotina</taxon>
        <taxon>Saccharomycetes</taxon>
        <taxon>Saccharomycetales</taxon>
        <taxon>Saccharomycetaceae</taxon>
        <taxon>Saccharomyces</taxon>
    </lineage>
</organism>
<reference key="1">
    <citation type="journal article" date="1994" name="Gene">
        <title>Two novel deduced serine/threonine protein kinases from Saccharomyces cerevisiae.</title>
        <authorList>
            <person name="Dahlkvist A."/>
            <person name="Sunnerhagen P."/>
        </authorList>
    </citation>
    <scope>NUCLEOTIDE SEQUENCE [GENOMIC DNA]</scope>
    <source>
        <strain>ATCC 204510 / AB320</strain>
    </source>
</reference>
<reference key="2">
    <citation type="journal article" date="1996" name="J. Biol. Chem.">
        <title>Identification and characterization of the CLK1 gene product, a novel CaM kinase-like protein kinase from the yeast Saccharomyces cerevisiae.</title>
        <authorList>
            <person name="Melcher M.L."/>
            <person name="Thorner J."/>
        </authorList>
    </citation>
    <scope>NUCLEOTIDE SEQUENCE [GENOMIC DNA]</scope>
    <source>
        <strain>YNN 214</strain>
    </source>
</reference>
<reference key="3">
    <citation type="journal article" date="1997" name="Nature">
        <title>The nucleotide sequence of Saccharomyces cerevisiae chromosome XII.</title>
        <authorList>
            <person name="Johnston M."/>
            <person name="Hillier L.W."/>
            <person name="Riles L."/>
            <person name="Albermann K."/>
            <person name="Andre B."/>
            <person name="Ansorge W."/>
            <person name="Benes V."/>
            <person name="Brueckner M."/>
            <person name="Delius H."/>
            <person name="Dubois E."/>
            <person name="Duesterhoeft A."/>
            <person name="Entian K.-D."/>
            <person name="Floeth M."/>
            <person name="Goffeau A."/>
            <person name="Hebling U."/>
            <person name="Heumann K."/>
            <person name="Heuss-Neitzel D."/>
            <person name="Hilbert H."/>
            <person name="Hilger F."/>
            <person name="Kleine K."/>
            <person name="Koetter P."/>
            <person name="Louis E.J."/>
            <person name="Messenguy F."/>
            <person name="Mewes H.-W."/>
            <person name="Miosga T."/>
            <person name="Moestl D."/>
            <person name="Mueller-Auer S."/>
            <person name="Nentwich U."/>
            <person name="Obermaier B."/>
            <person name="Piravandi E."/>
            <person name="Pohl T.M."/>
            <person name="Portetelle D."/>
            <person name="Purnelle B."/>
            <person name="Rechmann S."/>
            <person name="Rieger M."/>
            <person name="Rinke M."/>
            <person name="Rose M."/>
            <person name="Scharfe M."/>
            <person name="Scherens B."/>
            <person name="Scholler P."/>
            <person name="Schwager C."/>
            <person name="Schwarz S."/>
            <person name="Underwood A.P."/>
            <person name="Urrestarazu L.A."/>
            <person name="Vandenbol M."/>
            <person name="Verhasselt P."/>
            <person name="Vierendeels F."/>
            <person name="Voet M."/>
            <person name="Volckaert G."/>
            <person name="Voss H."/>
            <person name="Wambutt R."/>
            <person name="Wedler E."/>
            <person name="Wedler H."/>
            <person name="Zimmermann F.K."/>
            <person name="Zollner A."/>
            <person name="Hani J."/>
            <person name="Hoheisel J.D."/>
        </authorList>
    </citation>
    <scope>NUCLEOTIDE SEQUENCE [LARGE SCALE GENOMIC DNA]</scope>
    <source>
        <strain>ATCC 204508 / S288c</strain>
    </source>
</reference>
<reference key="4">
    <citation type="journal article" date="2014" name="G3 (Bethesda)">
        <title>The reference genome sequence of Saccharomyces cerevisiae: Then and now.</title>
        <authorList>
            <person name="Engel S.R."/>
            <person name="Dietrich F.S."/>
            <person name="Fisk D.G."/>
            <person name="Binkley G."/>
            <person name="Balakrishnan R."/>
            <person name="Costanzo M.C."/>
            <person name="Dwight S.S."/>
            <person name="Hitz B.C."/>
            <person name="Karra K."/>
            <person name="Nash R.S."/>
            <person name="Weng S."/>
            <person name="Wong E.D."/>
            <person name="Lloyd P."/>
            <person name="Skrzypek M.S."/>
            <person name="Miyasato S.R."/>
            <person name="Simison M."/>
            <person name="Cherry J.M."/>
        </authorList>
    </citation>
    <scope>GENOME REANNOTATION</scope>
    <source>
        <strain>ATCC 204508 / S288c</strain>
    </source>
</reference>
<reference key="5">
    <citation type="journal article" date="2000" name="Mol. Cell. Biol.">
        <title>Rck2 kinase is a substrate for the osmotic stress-activated mitogen-activated protein kinase Hog1.</title>
        <authorList>
            <person name="Bilsland-Marchesan E."/>
            <person name="Arino J."/>
            <person name="Saito H."/>
            <person name="Sunnerhagen P."/>
            <person name="Posas F."/>
        </authorList>
    </citation>
    <scope>FUNCTION</scope>
    <scope>PHOSPHORYLATION AT SER-520</scope>
    <scope>ACTIVITY REGULATION</scope>
    <scope>INTERACTION WITH HOG1</scope>
</reference>
<reference key="6">
    <citation type="journal article" date="2003" name="Nature">
        <title>Global analysis of protein localization in budding yeast.</title>
        <authorList>
            <person name="Huh W.-K."/>
            <person name="Falvo J.V."/>
            <person name="Gerke L.C."/>
            <person name="Carroll A.S."/>
            <person name="Howson R.W."/>
            <person name="Weissman J.S."/>
            <person name="O'Shea E.K."/>
        </authorList>
    </citation>
    <scope>SUBCELLULAR LOCATION [LARGE SCALE ANALYSIS]</scope>
</reference>
<reference key="7">
    <citation type="journal article" date="2003" name="Nature">
        <title>Global analysis of protein expression in yeast.</title>
        <authorList>
            <person name="Ghaemmaghami S."/>
            <person name="Huh W.-K."/>
            <person name="Bower K."/>
            <person name="Howson R.W."/>
            <person name="Belle A."/>
            <person name="Dephoure N."/>
            <person name="O'Shea E.K."/>
            <person name="Weissman J.S."/>
        </authorList>
    </citation>
    <scope>LEVEL OF PROTEIN EXPRESSION [LARGE SCALE ANALYSIS]</scope>
</reference>
<reference key="8">
    <citation type="journal article" date="2007" name="J. Proteome Res.">
        <title>Large-scale phosphorylation analysis of alpha-factor-arrested Saccharomyces cerevisiae.</title>
        <authorList>
            <person name="Li X."/>
            <person name="Gerber S.A."/>
            <person name="Rudner A.D."/>
            <person name="Beausoleil S.A."/>
            <person name="Haas W."/>
            <person name="Villen J."/>
            <person name="Elias J.E."/>
            <person name="Gygi S.P."/>
        </authorList>
    </citation>
    <scope>IDENTIFICATION BY MASS SPECTROMETRY [LARGE SCALE ANALYSIS]</scope>
    <source>
        <strain>ADR376</strain>
    </source>
</reference>
<reference key="9">
    <citation type="journal article" date="2007" name="Proc. Natl. Acad. Sci. U.S.A.">
        <title>Analysis of phosphorylation sites on proteins from Saccharomyces cerevisiae by electron transfer dissociation (ETD) mass spectrometry.</title>
        <authorList>
            <person name="Chi A."/>
            <person name="Huttenhower C."/>
            <person name="Geer L.Y."/>
            <person name="Coon J.J."/>
            <person name="Syka J.E.P."/>
            <person name="Bai D.L."/>
            <person name="Shabanowitz J."/>
            <person name="Burke D.J."/>
            <person name="Troyanskaya O.G."/>
            <person name="Hunt D.F."/>
        </authorList>
    </citation>
    <scope>IDENTIFICATION BY MASS SPECTROMETRY [LARGE SCALE ANALYSIS]</scope>
</reference>
<reference key="10">
    <citation type="journal article" date="2008" name="Mol. Cell. Proteomics">
        <title>A multidimensional chromatography technology for in-depth phosphoproteome analysis.</title>
        <authorList>
            <person name="Albuquerque C.P."/>
            <person name="Smolka M.B."/>
            <person name="Payne S.H."/>
            <person name="Bafna V."/>
            <person name="Eng J."/>
            <person name="Zhou H."/>
        </authorList>
    </citation>
    <scope>PHOSPHORYLATION [LARGE SCALE ANALYSIS] AT THR-350</scope>
    <scope>IDENTIFICATION BY MASS SPECTROMETRY [LARGE SCALE ANALYSIS]</scope>
</reference>
<reference key="11">
    <citation type="journal article" date="2009" name="Science">
        <title>Global analysis of Cdk1 substrate phosphorylation sites provides insights into evolution.</title>
        <authorList>
            <person name="Holt L.J."/>
            <person name="Tuch B.B."/>
            <person name="Villen J."/>
            <person name="Johnson A.D."/>
            <person name="Gygi S.P."/>
            <person name="Morgan D.O."/>
        </authorList>
    </citation>
    <scope>PHOSPHORYLATION [LARGE SCALE ANALYSIS] AT SER-46; SER-50 AND SER-187</scope>
    <scope>IDENTIFICATION BY MASS SPECTROMETRY [LARGE SCALE ANALYSIS]</scope>
</reference>
<sequence length="610" mass="68062">MLKIKALFSKKKPDQADLSQESKKPFKGKTRSSGTNNKDVSQITSSPKKSFQDKNIVQYPSVVADDHHMKSLTDELVTTIDSDSSPSDNITTENVETVTSVPAIDVHESSEGQLSSDPLISDESLSEQSEIISDIQDDSTDDDNMEDEIPEKSFLEQKELIGYKLINKIGEGAFSKVFRAIPAKNSSNEFLTKNYKAVAIKVIKKADLSSINGDHRKKDKGKDSTKTSSRDQVLKEVALHKTVSAGCSQIVAFIDFQETDSYYYIIQELLTGGEIFGEIVRLTYFSEDLSRHVIKQLALAVKHMHSLGVVHRDIKPENLLFEPIEFTRSIKPKLRKSDDPQTKADEGIFTPGVGGGGIGIVKLADFGLSKQIFSKNTKTPCGTVGYTAPEVVKDEHYSMKVDMWGIGCVLYTMLCGFPPFYDEKIDTLTEKISRGEYTFLKPWWDEISAGAKNAVAKLLELEPSKRYDIDQFLDDPWLNTFDCLPKEGESSQKKAGTSERRHPHKKQFQLFQRDSSLLFSPAAVAMRDAFDIGNAVKRTEEDRMGTRGGLGSLAEDEELEDSYSGAQGDEQLEQNMFQLTLDTSTILQRRKKVQENDVGPTIPISATIRE</sequence>